<dbReference type="EC" id="7.2.2.13" evidence="4"/>
<dbReference type="EMBL" id="U15176">
    <property type="protein sequence ID" value="AAB81285.1"/>
    <property type="molecule type" value="mRNA"/>
</dbReference>
<dbReference type="RefSeq" id="NP_001257959.1">
    <property type="nucleotide sequence ID" value="NM_001271030.1"/>
</dbReference>
<dbReference type="RefSeq" id="NP_074039.1">
    <property type="nucleotide sequence ID" value="NM_022848.3"/>
</dbReference>
<dbReference type="SMR" id="Q64541"/>
<dbReference type="BioGRID" id="247817">
    <property type="interactions" value="1"/>
</dbReference>
<dbReference type="FunCoup" id="Q64541">
    <property type="interactions" value="123"/>
</dbReference>
<dbReference type="STRING" id="10116.ENSRNOP00000062079"/>
<dbReference type="BindingDB" id="Q64541"/>
<dbReference type="ChEMBL" id="CHEMBL2485"/>
<dbReference type="iPTMnet" id="Q64541"/>
<dbReference type="PhosphoSitePlus" id="Q64541"/>
<dbReference type="jPOST" id="Q64541"/>
<dbReference type="PaxDb" id="10116-ENSRNOP00000062079"/>
<dbReference type="GeneID" id="29132"/>
<dbReference type="KEGG" id="rno:29132"/>
<dbReference type="UCSC" id="RGD:61952">
    <property type="organism name" value="rat"/>
</dbReference>
<dbReference type="AGR" id="RGD:61952"/>
<dbReference type="CTD" id="480"/>
<dbReference type="RGD" id="61952">
    <property type="gene designation" value="Atp1a4"/>
</dbReference>
<dbReference type="VEuPathDB" id="HostDB:ENSRNOG00000032378"/>
<dbReference type="eggNOG" id="KOG0203">
    <property type="taxonomic scope" value="Eukaryota"/>
</dbReference>
<dbReference type="HOGENOM" id="CLU_002360_4_3_1"/>
<dbReference type="InParanoid" id="Q64541"/>
<dbReference type="OMA" id="NGQEYSM"/>
<dbReference type="OrthoDB" id="3352408at2759"/>
<dbReference type="PhylomeDB" id="Q64541"/>
<dbReference type="Reactome" id="R-RNO-5578775">
    <property type="pathway name" value="Ion homeostasis"/>
</dbReference>
<dbReference type="Reactome" id="R-RNO-936837">
    <property type="pathway name" value="Ion transport by P-type ATPases"/>
</dbReference>
<dbReference type="SABIO-RK" id="Q64541"/>
<dbReference type="PRO" id="PR:Q64541"/>
<dbReference type="Proteomes" id="UP000002494">
    <property type="component" value="Chromosome 13"/>
</dbReference>
<dbReference type="Bgee" id="ENSRNOG00000032378">
    <property type="expression patterns" value="Expressed in testis and 6 other cell types or tissues"/>
</dbReference>
<dbReference type="GO" id="GO:0042995">
    <property type="term" value="C:cell projection"/>
    <property type="evidence" value="ECO:0000318"/>
    <property type="project" value="GO_Central"/>
</dbReference>
<dbReference type="GO" id="GO:0097733">
    <property type="term" value="C:photoreceptor cell cilium"/>
    <property type="evidence" value="ECO:0000266"/>
    <property type="project" value="RGD"/>
</dbReference>
<dbReference type="GO" id="GO:0005886">
    <property type="term" value="C:plasma membrane"/>
    <property type="evidence" value="ECO:0000318"/>
    <property type="project" value="GO_Central"/>
</dbReference>
<dbReference type="GO" id="GO:0120200">
    <property type="term" value="C:rod photoreceptor outer segment"/>
    <property type="evidence" value="ECO:0000266"/>
    <property type="project" value="RGD"/>
</dbReference>
<dbReference type="GO" id="GO:0005890">
    <property type="term" value="C:sodium:potassium-exchanging ATPase complex"/>
    <property type="evidence" value="ECO:0000266"/>
    <property type="project" value="RGD"/>
</dbReference>
<dbReference type="GO" id="GO:0097225">
    <property type="term" value="C:sperm midpiece"/>
    <property type="evidence" value="ECO:0000266"/>
    <property type="project" value="RGD"/>
</dbReference>
<dbReference type="GO" id="GO:0005524">
    <property type="term" value="F:ATP binding"/>
    <property type="evidence" value="ECO:0007669"/>
    <property type="project" value="UniProtKB-KW"/>
</dbReference>
<dbReference type="GO" id="GO:0016887">
    <property type="term" value="F:ATP hydrolysis activity"/>
    <property type="evidence" value="ECO:0007669"/>
    <property type="project" value="InterPro"/>
</dbReference>
<dbReference type="GO" id="GO:0019829">
    <property type="term" value="F:ATPase-coupled monoatomic cation transmembrane transporter activity"/>
    <property type="evidence" value="ECO:0000266"/>
    <property type="project" value="RGD"/>
</dbReference>
<dbReference type="GO" id="GO:0046872">
    <property type="term" value="F:metal ion binding"/>
    <property type="evidence" value="ECO:0007669"/>
    <property type="project" value="UniProtKB-KW"/>
</dbReference>
<dbReference type="GO" id="GO:0005391">
    <property type="term" value="F:P-type sodium:potassium-exchanging transporter activity"/>
    <property type="evidence" value="ECO:0000314"/>
    <property type="project" value="MGI"/>
</dbReference>
<dbReference type="GO" id="GO:0051649">
    <property type="term" value="P:establishment of localization in cell"/>
    <property type="evidence" value="ECO:0000266"/>
    <property type="project" value="RGD"/>
</dbReference>
<dbReference type="GO" id="GO:0009566">
    <property type="term" value="P:fertilization"/>
    <property type="evidence" value="ECO:0000266"/>
    <property type="project" value="RGD"/>
</dbReference>
<dbReference type="GO" id="GO:0030317">
    <property type="term" value="P:flagellated sperm motility"/>
    <property type="evidence" value="ECO:0000314"/>
    <property type="project" value="RGD"/>
</dbReference>
<dbReference type="GO" id="GO:0030007">
    <property type="term" value="P:intracellular potassium ion homeostasis"/>
    <property type="evidence" value="ECO:0000318"/>
    <property type="project" value="GO_Central"/>
</dbReference>
<dbReference type="GO" id="GO:0006883">
    <property type="term" value="P:intracellular sodium ion homeostasis"/>
    <property type="evidence" value="ECO:0000318"/>
    <property type="project" value="GO_Central"/>
</dbReference>
<dbReference type="GO" id="GO:1990573">
    <property type="term" value="P:potassium ion import across plasma membrane"/>
    <property type="evidence" value="ECO:0000318"/>
    <property type="project" value="GO_Central"/>
</dbReference>
<dbReference type="GO" id="GO:0071805">
    <property type="term" value="P:potassium ion transmembrane transport"/>
    <property type="evidence" value="ECO:0000266"/>
    <property type="project" value="RGD"/>
</dbReference>
<dbReference type="GO" id="GO:0006813">
    <property type="term" value="P:potassium ion transport"/>
    <property type="evidence" value="ECO:0000304"/>
    <property type="project" value="RGD"/>
</dbReference>
<dbReference type="GO" id="GO:1902600">
    <property type="term" value="P:proton transmembrane transport"/>
    <property type="evidence" value="ECO:0000318"/>
    <property type="project" value="GO_Central"/>
</dbReference>
<dbReference type="GO" id="GO:0030641">
    <property type="term" value="P:regulation of cellular pH"/>
    <property type="evidence" value="ECO:0000314"/>
    <property type="project" value="RGD"/>
</dbReference>
<dbReference type="GO" id="GO:0042391">
    <property type="term" value="P:regulation of membrane potential"/>
    <property type="evidence" value="ECO:0000266"/>
    <property type="project" value="RGD"/>
</dbReference>
<dbReference type="GO" id="GO:0036376">
    <property type="term" value="P:sodium ion export across plasma membrane"/>
    <property type="evidence" value="ECO:0000318"/>
    <property type="project" value="GO_Central"/>
</dbReference>
<dbReference type="GO" id="GO:0035725">
    <property type="term" value="P:sodium ion transmembrane transport"/>
    <property type="evidence" value="ECO:0000266"/>
    <property type="project" value="RGD"/>
</dbReference>
<dbReference type="GO" id="GO:0006814">
    <property type="term" value="P:sodium ion transport"/>
    <property type="evidence" value="ECO:0000266"/>
    <property type="project" value="RGD"/>
</dbReference>
<dbReference type="GO" id="GO:0007283">
    <property type="term" value="P:spermatogenesis"/>
    <property type="evidence" value="ECO:0000270"/>
    <property type="project" value="RGD"/>
</dbReference>
<dbReference type="CDD" id="cd02608">
    <property type="entry name" value="P-type_ATPase_Na-K_like"/>
    <property type="match status" value="1"/>
</dbReference>
<dbReference type="FunFam" id="2.70.150.10:FF:000106">
    <property type="entry name" value="Sodium/potassium-transporting ATPase subunit alpha"/>
    <property type="match status" value="1"/>
</dbReference>
<dbReference type="FunFam" id="3.40.1110.10:FF:000001">
    <property type="entry name" value="Sodium/potassium-transporting ATPase subunit alpha"/>
    <property type="match status" value="1"/>
</dbReference>
<dbReference type="FunFam" id="3.40.50.1000:FF:000004">
    <property type="entry name" value="Sodium/potassium-transporting ATPase subunit alpha"/>
    <property type="match status" value="1"/>
</dbReference>
<dbReference type="FunFam" id="1.20.1110.10:FF:000095">
    <property type="entry name" value="Sodium/potassium-transporting ATPase subunit alpha-1"/>
    <property type="match status" value="2"/>
</dbReference>
<dbReference type="Gene3D" id="3.40.1110.10">
    <property type="entry name" value="Calcium-transporting ATPase, cytoplasmic domain N"/>
    <property type="match status" value="1"/>
</dbReference>
<dbReference type="Gene3D" id="2.70.150.10">
    <property type="entry name" value="Calcium-transporting ATPase, cytoplasmic transduction domain A"/>
    <property type="match status" value="1"/>
</dbReference>
<dbReference type="Gene3D" id="1.20.1110.10">
    <property type="entry name" value="Calcium-transporting ATPase, transmembrane domain"/>
    <property type="match status" value="1"/>
</dbReference>
<dbReference type="Gene3D" id="3.40.50.1000">
    <property type="entry name" value="HAD superfamily/HAD-like"/>
    <property type="match status" value="1"/>
</dbReference>
<dbReference type="InterPro" id="IPR006068">
    <property type="entry name" value="ATPase_P-typ_cation-transptr_C"/>
</dbReference>
<dbReference type="InterPro" id="IPR004014">
    <property type="entry name" value="ATPase_P-typ_cation-transptr_N"/>
</dbReference>
<dbReference type="InterPro" id="IPR023299">
    <property type="entry name" value="ATPase_P-typ_cyto_dom_N"/>
</dbReference>
<dbReference type="InterPro" id="IPR018303">
    <property type="entry name" value="ATPase_P-typ_P_site"/>
</dbReference>
<dbReference type="InterPro" id="IPR023298">
    <property type="entry name" value="ATPase_P-typ_TM_dom_sf"/>
</dbReference>
<dbReference type="InterPro" id="IPR008250">
    <property type="entry name" value="ATPase_P-typ_transduc_dom_A_sf"/>
</dbReference>
<dbReference type="InterPro" id="IPR050510">
    <property type="entry name" value="Cation_transp_ATPase_P-type"/>
</dbReference>
<dbReference type="InterPro" id="IPR036412">
    <property type="entry name" value="HAD-like_sf"/>
</dbReference>
<dbReference type="InterPro" id="IPR023214">
    <property type="entry name" value="HAD_sf"/>
</dbReference>
<dbReference type="InterPro" id="IPR005775">
    <property type="entry name" value="P-type_ATPase_IIC"/>
</dbReference>
<dbReference type="InterPro" id="IPR001757">
    <property type="entry name" value="P_typ_ATPase"/>
</dbReference>
<dbReference type="InterPro" id="IPR044492">
    <property type="entry name" value="P_typ_ATPase_HD_dom"/>
</dbReference>
<dbReference type="NCBIfam" id="TIGR01106">
    <property type="entry name" value="ATPase-IIC_X-K"/>
    <property type="match status" value="1"/>
</dbReference>
<dbReference type="NCBIfam" id="TIGR01494">
    <property type="entry name" value="ATPase_P-type"/>
    <property type="match status" value="2"/>
</dbReference>
<dbReference type="PANTHER" id="PTHR43294">
    <property type="entry name" value="SODIUM/POTASSIUM-TRANSPORTING ATPASE SUBUNIT ALPHA"/>
    <property type="match status" value="1"/>
</dbReference>
<dbReference type="PANTHER" id="PTHR43294:SF3">
    <property type="entry name" value="SODIUM_POTASSIUM-TRANSPORTING ATPASE SUBUNIT ALPHA-4"/>
    <property type="match status" value="1"/>
</dbReference>
<dbReference type="Pfam" id="PF13246">
    <property type="entry name" value="Cation_ATPase"/>
    <property type="match status" value="1"/>
</dbReference>
<dbReference type="Pfam" id="PF00689">
    <property type="entry name" value="Cation_ATPase_C"/>
    <property type="match status" value="1"/>
</dbReference>
<dbReference type="Pfam" id="PF00690">
    <property type="entry name" value="Cation_ATPase_N"/>
    <property type="match status" value="1"/>
</dbReference>
<dbReference type="Pfam" id="PF00122">
    <property type="entry name" value="E1-E2_ATPase"/>
    <property type="match status" value="1"/>
</dbReference>
<dbReference type="Pfam" id="PF00702">
    <property type="entry name" value="Hydrolase"/>
    <property type="match status" value="1"/>
</dbReference>
<dbReference type="PRINTS" id="PR00119">
    <property type="entry name" value="CATATPASE"/>
</dbReference>
<dbReference type="PRINTS" id="PR00121">
    <property type="entry name" value="NAKATPASE"/>
</dbReference>
<dbReference type="SFLD" id="SFLDG00002">
    <property type="entry name" value="C1.7:_P-type_atpase_like"/>
    <property type="match status" value="1"/>
</dbReference>
<dbReference type="SFLD" id="SFLDF00027">
    <property type="entry name" value="p-type_atpase"/>
    <property type="match status" value="1"/>
</dbReference>
<dbReference type="SMART" id="SM00831">
    <property type="entry name" value="Cation_ATPase_N"/>
    <property type="match status" value="1"/>
</dbReference>
<dbReference type="SUPFAM" id="SSF81653">
    <property type="entry name" value="Calcium ATPase, transduction domain A"/>
    <property type="match status" value="1"/>
</dbReference>
<dbReference type="SUPFAM" id="SSF81665">
    <property type="entry name" value="Calcium ATPase, transmembrane domain M"/>
    <property type="match status" value="1"/>
</dbReference>
<dbReference type="SUPFAM" id="SSF56784">
    <property type="entry name" value="HAD-like"/>
    <property type="match status" value="1"/>
</dbReference>
<dbReference type="SUPFAM" id="SSF81660">
    <property type="entry name" value="Metal cation-transporting ATPase, ATP-binding domain N"/>
    <property type="match status" value="1"/>
</dbReference>
<dbReference type="PROSITE" id="PS00154">
    <property type="entry name" value="ATPASE_E1_E2"/>
    <property type="match status" value="1"/>
</dbReference>
<proteinExistence type="evidence at protein level"/>
<sequence length="1028" mass="114005">MEPGKETAATSEQKPRPTLRASNTNRQPKVKRRKKDLEELKKEVVMDDHKLTLDELSAKYSVDLTKGLSVTDAQEILTLNGPNVLTPPPTTPEWIKFCKQLFGGFSLLLWTGSLLCFLAYGIHVSYYQENANKDNLYLGIVLSAVVIITGCFSYYQEAKSSKIMESFKTMVPQQALVIRDGEKMQINVRDVVLGDLVEVKGGDQVPADIRVIAAQGCKVDNSSLTGESEPQSRCPDCTHENPLETRNIIFFSTNCVEGTARGVVIATGDHTVMGRIASLTSGLTMGKTPIATEIEHFIHIITAVAVFLGVTFFFLSLILGYTWLDAVIFLIGIIVANVPEGLLATVTVCLTLTAKRMARKNCLVKNLEAVETLGSTSTICSDKTGTLTQNRMTVAHLWFDKTVYEADTSEEQTTGKTFPKSSDTWFYLARIAGLCNRADFKPHQESLPITKRTTTGDASESALLKFIEQSYSPVSEMRQKNPKVAEIPFNSTNKYQMSIHLLEDNSEAHVLLMKGAPERILDFCSSFLLNGQEYPMDEEMKTDFQNAYIELGGLGERVLGFCFLNLPSNFSKGFQFNTEELNFPMENLCFAGLISMIDPPRTAVPDAVSKCRSAGIKVIMVTGDHPITAKAIAKSVGIISEANETAEDIAARLNISISQVSNKSIKAIVVHGSELKDMDSGQLDNILKSYKEIVFARTSPQQKLIIVEGCQRLGAIVAVTGDGVNDSPALKKADIGIAMGITGSDVSKQAADMILLDDNFASIVTGVEEGRLIFDNLKKSIAYTLTSNIPEITPFLLFIVLSIPLPLGTITILCIDLGTDMVPAISLAYETPESDIMKRLPRNPKTDNLVNDRLIGMAYGQIGMIQALAGFFTYFVILAENGFKPLDLLGIRLYWDDTNLNDLEDTYGQQWTYEQRKVVEFTCQTAFFISIVIVQWADLIICKTRRNSLFKQGMKNKVLIFGLLEETILAACLSYIPGMDVALRMYPLKINWWFCALPYSVLIFIYDEVRKLIIRRRPGGWLEKETYY</sequence>
<gene>
    <name type="primary">Atp1a4</name>
    <name type="synonym">Atp1al2</name>
</gene>
<protein>
    <recommendedName>
        <fullName>Sodium/potassium-transporting ATPase subunit alpha-4</fullName>
        <shortName>Na(+)/K(+) ATPase alpha-4 subunit</shortName>
        <ecNumber evidence="4">7.2.2.13</ecNumber>
    </recommendedName>
    <alternativeName>
        <fullName>Sodium pump subunit alpha-4</fullName>
    </alternativeName>
</protein>
<evidence type="ECO:0000250" key="1"/>
<evidence type="ECO:0000255" key="2"/>
<evidence type="ECO:0000256" key="3">
    <source>
        <dbReference type="SAM" id="MobiDB-lite"/>
    </source>
</evidence>
<evidence type="ECO:0000269" key="4">
    <source>
    </source>
</evidence>
<evidence type="ECO:0000305" key="5"/>
<feature type="chain" id="PRO_0000046305" description="Sodium/potassium-transporting ATPase subunit alpha-4">
    <location>
        <begin position="1"/>
        <end position="1028"/>
    </location>
</feature>
<feature type="topological domain" description="Cytoplasmic" evidence="2">
    <location>
        <begin position="1"/>
        <end position="92"/>
    </location>
</feature>
<feature type="transmembrane region" description="Helical" evidence="2">
    <location>
        <begin position="93"/>
        <end position="113"/>
    </location>
</feature>
<feature type="topological domain" description="Extracellular" evidence="2">
    <location>
        <begin position="114"/>
        <end position="137"/>
    </location>
</feature>
<feature type="transmembrane region" description="Helical" evidence="2">
    <location>
        <begin position="138"/>
        <end position="158"/>
    </location>
</feature>
<feature type="topological domain" description="Cytoplasmic" evidence="2">
    <location>
        <begin position="159"/>
        <end position="294"/>
    </location>
</feature>
<feature type="transmembrane region" description="Helical" evidence="2">
    <location>
        <begin position="295"/>
        <end position="314"/>
    </location>
</feature>
<feature type="topological domain" description="Extracellular" evidence="2">
    <location>
        <begin position="315"/>
        <end position="326"/>
    </location>
</feature>
<feature type="transmembrane region" description="Helical" evidence="2">
    <location>
        <begin position="327"/>
        <end position="344"/>
    </location>
</feature>
<feature type="topological domain" description="Cytoplasmic" evidence="2">
    <location>
        <begin position="345"/>
        <end position="777"/>
    </location>
</feature>
<feature type="transmembrane region" description="Helical" evidence="2">
    <location>
        <begin position="778"/>
        <end position="797"/>
    </location>
</feature>
<feature type="topological domain" description="Extracellular" evidence="2">
    <location>
        <begin position="798"/>
        <end position="807"/>
    </location>
</feature>
<feature type="transmembrane region" description="Helical" evidence="2">
    <location>
        <begin position="808"/>
        <end position="828"/>
    </location>
</feature>
<feature type="topological domain" description="Cytoplasmic" evidence="2">
    <location>
        <begin position="829"/>
        <end position="848"/>
    </location>
</feature>
<feature type="transmembrane region" description="Helical" evidence="2">
    <location>
        <begin position="849"/>
        <end position="871"/>
    </location>
</feature>
<feature type="topological domain" description="Extracellular" evidence="2">
    <location>
        <begin position="872"/>
        <end position="923"/>
    </location>
</feature>
<feature type="transmembrane region" description="Helical" evidence="2">
    <location>
        <begin position="924"/>
        <end position="943"/>
    </location>
</feature>
<feature type="topological domain" description="Cytoplasmic" evidence="2">
    <location>
        <begin position="944"/>
        <end position="956"/>
    </location>
</feature>
<feature type="transmembrane region" description="Helical" evidence="2">
    <location>
        <begin position="957"/>
        <end position="975"/>
    </location>
</feature>
<feature type="topological domain" description="Extracellular" evidence="2">
    <location>
        <begin position="976"/>
        <end position="990"/>
    </location>
</feature>
<feature type="transmembrane region" description="Helical" evidence="2">
    <location>
        <begin position="991"/>
        <end position="1011"/>
    </location>
</feature>
<feature type="topological domain" description="Cytoplasmic" evidence="2">
    <location>
        <begin position="1012"/>
        <end position="1028"/>
    </location>
</feature>
<feature type="region of interest" description="Disordered" evidence="3">
    <location>
        <begin position="1"/>
        <end position="36"/>
    </location>
</feature>
<feature type="region of interest" description="Interaction with phosphoinositide-3 kinase" evidence="1">
    <location>
        <begin position="87"/>
        <end position="89"/>
    </location>
</feature>
<feature type="active site" description="4-aspartylphosphate intermediate" evidence="1">
    <location>
        <position position="382"/>
    </location>
</feature>
<feature type="binding site" evidence="1">
    <location>
        <position position="722"/>
    </location>
    <ligand>
        <name>Mg(2+)</name>
        <dbReference type="ChEBI" id="CHEBI:18420"/>
    </ligand>
</feature>
<feature type="binding site" evidence="1">
    <location>
        <position position="726"/>
    </location>
    <ligand>
        <name>Mg(2+)</name>
        <dbReference type="ChEBI" id="CHEBI:18420"/>
    </ligand>
</feature>
<feature type="modified residue" description="Phosphoserine; by PKA" evidence="1">
    <location>
        <position position="948"/>
    </location>
</feature>
<comment type="function">
    <text evidence="4">This is the catalytic component of the active enzyme, which catalyzes the hydrolysis of ATP coupled with the exchange of sodium and potassium ions across the plasma membrane. This action creates the electrochemical gradient of sodium and potassium ions, providing the energy for active transport of various nutrients. Plays a role in sperm motility.</text>
</comment>
<comment type="catalytic activity">
    <reaction evidence="4">
        <text>K(+)(out) + Na(+)(in) + ATP + H2O = K(+)(in) + Na(+)(out) + ADP + phosphate + H(+)</text>
        <dbReference type="Rhea" id="RHEA:18353"/>
        <dbReference type="ChEBI" id="CHEBI:15377"/>
        <dbReference type="ChEBI" id="CHEBI:15378"/>
        <dbReference type="ChEBI" id="CHEBI:29101"/>
        <dbReference type="ChEBI" id="CHEBI:29103"/>
        <dbReference type="ChEBI" id="CHEBI:30616"/>
        <dbReference type="ChEBI" id="CHEBI:43474"/>
        <dbReference type="ChEBI" id="CHEBI:456216"/>
        <dbReference type="EC" id="7.2.2.13"/>
    </reaction>
    <physiologicalReaction direction="left-to-right" evidence="4">
        <dbReference type="Rhea" id="RHEA:18354"/>
    </physiologicalReaction>
</comment>
<comment type="activity regulation">
    <text evidence="1">Specifically inhibited by an endogenous cardiac glycoside, ouabain.</text>
</comment>
<comment type="subunit">
    <text evidence="5">The sodium/potassium-transporting ATPase is composed of a catalytic alpha subunit, an auxiliary non-catalytic beta subunit and an additional regulatory subunit.</text>
</comment>
<comment type="subcellular location">
    <subcellularLocation>
        <location>Cell membrane</location>
        <topology>Multi-pass membrane protein</topology>
    </subcellularLocation>
</comment>
<comment type="similarity">
    <text evidence="5">Belongs to the cation transport ATPase (P-type) (TC 3.A.3) family. Type IIC subfamily.</text>
</comment>
<accession>Q64541</accession>
<name>AT1A4_RAT</name>
<reference key="1">
    <citation type="journal article" date="1994" name="Proc. Natl. Acad. Sci. U.S.A.">
        <title>A putative fourth Na+,K(+)-ATPase alpha-subunit gene is expressed in testis.</title>
        <authorList>
            <person name="Shamraj O.I."/>
            <person name="Lingrel J.B."/>
        </authorList>
    </citation>
    <scope>NUCLEOTIDE SEQUENCE [MRNA]</scope>
    <source>
        <strain>Sprague-Dawley</strain>
        <tissue>Testis</tissue>
    </source>
</reference>
<reference key="2">
    <citation type="journal article" date="2010" name="Reproduction">
        <title>Activity of the Na,K-ATPase alpha4 isoform is important for membrane potential, intracellular Ca2+, and pH to maintain motility in rat spermatozoa.</title>
        <authorList>
            <person name="Jimenez T."/>
            <person name="Sanchez G."/>
            <person name="Wertheimer E."/>
            <person name="Blanco G."/>
        </authorList>
    </citation>
    <scope>FUNCTION</scope>
    <scope>CATALYTIC ACTIVITY</scope>
</reference>
<organism>
    <name type="scientific">Rattus norvegicus</name>
    <name type="common">Rat</name>
    <dbReference type="NCBI Taxonomy" id="10116"/>
    <lineage>
        <taxon>Eukaryota</taxon>
        <taxon>Metazoa</taxon>
        <taxon>Chordata</taxon>
        <taxon>Craniata</taxon>
        <taxon>Vertebrata</taxon>
        <taxon>Euteleostomi</taxon>
        <taxon>Mammalia</taxon>
        <taxon>Eutheria</taxon>
        <taxon>Euarchontoglires</taxon>
        <taxon>Glires</taxon>
        <taxon>Rodentia</taxon>
        <taxon>Myomorpha</taxon>
        <taxon>Muroidea</taxon>
        <taxon>Muridae</taxon>
        <taxon>Murinae</taxon>
        <taxon>Rattus</taxon>
    </lineage>
</organism>
<keyword id="KW-0067">ATP-binding</keyword>
<keyword id="KW-1003">Cell membrane</keyword>
<keyword id="KW-0406">Ion transport</keyword>
<keyword id="KW-0460">Magnesium</keyword>
<keyword id="KW-0472">Membrane</keyword>
<keyword id="KW-0479">Metal-binding</keyword>
<keyword id="KW-0547">Nucleotide-binding</keyword>
<keyword id="KW-0597">Phosphoprotein</keyword>
<keyword id="KW-0630">Potassium</keyword>
<keyword id="KW-0633">Potassium transport</keyword>
<keyword id="KW-1185">Reference proteome</keyword>
<keyword id="KW-0915">Sodium</keyword>
<keyword id="KW-0739">Sodium transport</keyword>
<keyword id="KW-0740">Sodium/potassium transport</keyword>
<keyword id="KW-1278">Translocase</keyword>
<keyword id="KW-0812">Transmembrane</keyword>
<keyword id="KW-1133">Transmembrane helix</keyword>
<keyword id="KW-0813">Transport</keyword>